<evidence type="ECO:0000255" key="1">
    <source>
        <dbReference type="HAMAP-Rule" id="MF_00365"/>
    </source>
</evidence>
<gene>
    <name evidence="1" type="primary">recF</name>
    <name type="ordered locus">CLD_0822</name>
</gene>
<accession>B1IDU6</accession>
<protein>
    <recommendedName>
        <fullName evidence="1">DNA replication and repair protein RecF</fullName>
    </recommendedName>
</protein>
<reference key="1">
    <citation type="journal article" date="2007" name="PLoS ONE">
        <title>Analysis of the neurotoxin complex genes in Clostridium botulinum A1-A4 and B1 strains: BoNT/A3, /Ba4 and /B1 clusters are located within plasmids.</title>
        <authorList>
            <person name="Smith T.J."/>
            <person name="Hill K.K."/>
            <person name="Foley B.T."/>
            <person name="Detter J.C."/>
            <person name="Munk A.C."/>
            <person name="Bruce D.C."/>
            <person name="Doggett N.A."/>
            <person name="Smith L.A."/>
            <person name="Marks J.D."/>
            <person name="Xie G."/>
            <person name="Brettin T.S."/>
        </authorList>
    </citation>
    <scope>NUCLEOTIDE SEQUENCE [LARGE SCALE GENOMIC DNA]</scope>
    <source>
        <strain>Okra / Type B1</strain>
    </source>
</reference>
<dbReference type="EMBL" id="CP000939">
    <property type="protein sequence ID" value="ACA44108.1"/>
    <property type="molecule type" value="Genomic_DNA"/>
</dbReference>
<dbReference type="RefSeq" id="WP_003406100.1">
    <property type="nucleotide sequence ID" value="NC_010516.1"/>
</dbReference>
<dbReference type="SMR" id="B1IDU6"/>
<dbReference type="KEGG" id="cbb:CLD_0822"/>
<dbReference type="HOGENOM" id="CLU_040267_0_1_9"/>
<dbReference type="Proteomes" id="UP000008541">
    <property type="component" value="Chromosome"/>
</dbReference>
<dbReference type="GO" id="GO:0005737">
    <property type="term" value="C:cytoplasm"/>
    <property type="evidence" value="ECO:0007669"/>
    <property type="project" value="UniProtKB-SubCell"/>
</dbReference>
<dbReference type="GO" id="GO:0005524">
    <property type="term" value="F:ATP binding"/>
    <property type="evidence" value="ECO:0007669"/>
    <property type="project" value="UniProtKB-UniRule"/>
</dbReference>
<dbReference type="GO" id="GO:0003697">
    <property type="term" value="F:single-stranded DNA binding"/>
    <property type="evidence" value="ECO:0007669"/>
    <property type="project" value="UniProtKB-UniRule"/>
</dbReference>
<dbReference type="GO" id="GO:0006260">
    <property type="term" value="P:DNA replication"/>
    <property type="evidence" value="ECO:0007669"/>
    <property type="project" value="UniProtKB-UniRule"/>
</dbReference>
<dbReference type="GO" id="GO:0000731">
    <property type="term" value="P:DNA synthesis involved in DNA repair"/>
    <property type="evidence" value="ECO:0007669"/>
    <property type="project" value="TreeGrafter"/>
</dbReference>
<dbReference type="GO" id="GO:0006302">
    <property type="term" value="P:double-strand break repair"/>
    <property type="evidence" value="ECO:0007669"/>
    <property type="project" value="TreeGrafter"/>
</dbReference>
<dbReference type="GO" id="GO:0009432">
    <property type="term" value="P:SOS response"/>
    <property type="evidence" value="ECO:0007669"/>
    <property type="project" value="UniProtKB-UniRule"/>
</dbReference>
<dbReference type="CDD" id="cd03242">
    <property type="entry name" value="ABC_RecF"/>
    <property type="match status" value="1"/>
</dbReference>
<dbReference type="Gene3D" id="3.40.50.300">
    <property type="entry name" value="P-loop containing nucleotide triphosphate hydrolases"/>
    <property type="match status" value="1"/>
</dbReference>
<dbReference type="Gene3D" id="1.20.1050.90">
    <property type="entry name" value="RecF/RecN/SMC, N-terminal domain"/>
    <property type="match status" value="1"/>
</dbReference>
<dbReference type="HAMAP" id="MF_00365">
    <property type="entry name" value="RecF"/>
    <property type="match status" value="1"/>
</dbReference>
<dbReference type="InterPro" id="IPR001238">
    <property type="entry name" value="DNA-binding_RecF"/>
</dbReference>
<dbReference type="InterPro" id="IPR018078">
    <property type="entry name" value="DNA-binding_RecF_CS"/>
</dbReference>
<dbReference type="InterPro" id="IPR027417">
    <property type="entry name" value="P-loop_NTPase"/>
</dbReference>
<dbReference type="InterPro" id="IPR003395">
    <property type="entry name" value="RecF/RecN/SMC_N"/>
</dbReference>
<dbReference type="InterPro" id="IPR042174">
    <property type="entry name" value="RecF_2"/>
</dbReference>
<dbReference type="NCBIfam" id="TIGR00611">
    <property type="entry name" value="recf"/>
    <property type="match status" value="1"/>
</dbReference>
<dbReference type="PANTHER" id="PTHR32182">
    <property type="entry name" value="DNA REPLICATION AND REPAIR PROTEIN RECF"/>
    <property type="match status" value="1"/>
</dbReference>
<dbReference type="PANTHER" id="PTHR32182:SF0">
    <property type="entry name" value="DNA REPLICATION AND REPAIR PROTEIN RECF"/>
    <property type="match status" value="1"/>
</dbReference>
<dbReference type="Pfam" id="PF02463">
    <property type="entry name" value="SMC_N"/>
    <property type="match status" value="1"/>
</dbReference>
<dbReference type="SUPFAM" id="SSF52540">
    <property type="entry name" value="P-loop containing nucleoside triphosphate hydrolases"/>
    <property type="match status" value="1"/>
</dbReference>
<dbReference type="PROSITE" id="PS00617">
    <property type="entry name" value="RECF_1"/>
    <property type="match status" value="1"/>
</dbReference>
<dbReference type="PROSITE" id="PS00618">
    <property type="entry name" value="RECF_2"/>
    <property type="match status" value="1"/>
</dbReference>
<comment type="function">
    <text evidence="1">The RecF protein is involved in DNA metabolism; it is required for DNA replication and normal SOS inducibility. RecF binds preferentially to single-stranded, linear DNA. It also seems to bind ATP.</text>
</comment>
<comment type="subcellular location">
    <subcellularLocation>
        <location evidence="1">Cytoplasm</location>
    </subcellularLocation>
</comment>
<comment type="similarity">
    <text evidence="1">Belongs to the RecF family.</text>
</comment>
<keyword id="KW-0067">ATP-binding</keyword>
<keyword id="KW-0963">Cytoplasm</keyword>
<keyword id="KW-0227">DNA damage</keyword>
<keyword id="KW-0234">DNA repair</keyword>
<keyword id="KW-0235">DNA replication</keyword>
<keyword id="KW-0238">DNA-binding</keyword>
<keyword id="KW-0547">Nucleotide-binding</keyword>
<keyword id="KW-0742">SOS response</keyword>
<proteinExistence type="inferred from homology"/>
<feature type="chain" id="PRO_1000121099" description="DNA replication and repair protein RecF">
    <location>
        <begin position="1"/>
        <end position="364"/>
    </location>
</feature>
<feature type="binding site" evidence="1">
    <location>
        <begin position="30"/>
        <end position="37"/>
    </location>
    <ligand>
        <name>ATP</name>
        <dbReference type="ChEBI" id="CHEBI:30616"/>
    </ligand>
</feature>
<name>RECF_CLOBK</name>
<sequence length="364" mass="42671">MYIKNVHLINFRNYDDMYLELSPNTNIFVGNNAQGKTNILESIYYSSIGKSHRTNKDKDLIKWDKNNTYLRTYVSRERLDKTIDINIFKNGKKAITVNKIKIKKISELMGNLNVVMFSPEDLRIIKDSPGNRRKFLDIELCKINNVYYHDLVQYNKILSERNTALKNWNNKINDIIDIYDEQLSKYGAFIIKERNKYLDKLNIIGKNIHKKITNDLEDINFRYLTNIKDFDNTEKELLIVLKKNRKKDLERNSTSIGPHRDDFEVSINNIDTRIFGSQGQQRTAVLTLKFASLEIIKNIIGEYPVLLLDDVLSELDSNRQKFVLNSIDKIQTIITCTGIEEIDKYLDKKQSQLYLVNNGKIKRV</sequence>
<organism>
    <name type="scientific">Clostridium botulinum (strain Okra / Type B1)</name>
    <dbReference type="NCBI Taxonomy" id="498213"/>
    <lineage>
        <taxon>Bacteria</taxon>
        <taxon>Bacillati</taxon>
        <taxon>Bacillota</taxon>
        <taxon>Clostridia</taxon>
        <taxon>Eubacteriales</taxon>
        <taxon>Clostridiaceae</taxon>
        <taxon>Clostridium</taxon>
    </lineage>
</organism>